<reference key="1">
    <citation type="journal article" date="2001" name="Mol. Cell. Endocrinol.">
        <title>Molecular cloning of preproinsulin cDNAs from several osteoglossomorphs and a cyprinid.</title>
        <authorList>
            <person name="Al-Mahrouki A.A."/>
            <person name="Irwin D.M."/>
            <person name="Graham L.C."/>
            <person name="Youson J.H."/>
        </authorList>
    </citation>
    <scope>NUCLEOTIDE SEQUENCE [MRNA]</scope>
</reference>
<feature type="signal peptide" evidence="2">
    <location>
        <begin position="1"/>
        <end position="23"/>
    </location>
</feature>
<feature type="peptide" id="PRO_0000042212" description="Insulin B chain">
    <location>
        <begin position="24"/>
        <end position="53"/>
    </location>
</feature>
<feature type="propeptide" id="PRO_0000042213" description="C peptide" evidence="1">
    <location>
        <begin position="56"/>
        <end position="87"/>
    </location>
</feature>
<feature type="peptide" id="PRO_0000042214" description="Insulin A chain">
    <location>
        <begin position="90"/>
        <end position="110"/>
    </location>
</feature>
<feature type="disulfide bond" description="Interchain (between B and A chains)" evidence="1">
    <location>
        <begin position="30"/>
        <end position="96"/>
    </location>
</feature>
<feature type="disulfide bond" description="Interchain (between B and A chains)" evidence="1">
    <location>
        <begin position="42"/>
        <end position="109"/>
    </location>
</feature>
<feature type="disulfide bond" evidence="1">
    <location>
        <begin position="95"/>
        <end position="100"/>
    </location>
</feature>
<name>INS_PANBU</name>
<protein>
    <recommendedName>
        <fullName>Insulin</fullName>
    </recommendedName>
    <component>
        <recommendedName>
            <fullName>Insulin B chain</fullName>
        </recommendedName>
    </component>
    <component>
        <recommendedName>
            <fullName>Insulin A chain</fullName>
        </recommendedName>
    </component>
</protein>
<comment type="function">
    <text>Insulin decreases blood glucose concentration. It increases cell permeability to monosaccharides, amino acids and fatty acids. It accelerates glycolysis, the pentose phosphate cycle, and glycogen synthesis in liver.</text>
</comment>
<comment type="subunit">
    <text>Heterodimer of a B chain and an A chain linked by two disulfide bonds.</text>
</comment>
<comment type="subcellular location">
    <subcellularLocation>
        <location>Secreted</location>
    </subcellularLocation>
</comment>
<comment type="similarity">
    <text evidence="3">Belongs to the insulin family.</text>
</comment>
<gene>
    <name type="primary">ins</name>
</gene>
<organism>
    <name type="scientific">Pantodon buchholzi</name>
    <name type="common">Freshwater butterflyfish</name>
    <dbReference type="NCBI Taxonomy" id="8276"/>
    <lineage>
        <taxon>Eukaryota</taxon>
        <taxon>Metazoa</taxon>
        <taxon>Chordata</taxon>
        <taxon>Craniata</taxon>
        <taxon>Vertebrata</taxon>
        <taxon>Euteleostomi</taxon>
        <taxon>Actinopterygii</taxon>
        <taxon>Neopterygii</taxon>
        <taxon>Teleostei</taxon>
        <taxon>Osteoglossocephala</taxon>
        <taxon>Osteoglossomorpha</taxon>
        <taxon>Osteoglossiformes</taxon>
        <taxon>Pantodontidae</taxon>
        <taxon>Pantodon</taxon>
    </lineage>
</organism>
<dbReference type="EMBL" id="AF199588">
    <property type="protein sequence ID" value="AAK28712.1"/>
    <property type="molecule type" value="mRNA"/>
</dbReference>
<dbReference type="SMR" id="Q98TA8"/>
<dbReference type="GO" id="GO:0005615">
    <property type="term" value="C:extracellular space"/>
    <property type="evidence" value="ECO:0007669"/>
    <property type="project" value="TreeGrafter"/>
</dbReference>
<dbReference type="GO" id="GO:0005179">
    <property type="term" value="F:hormone activity"/>
    <property type="evidence" value="ECO:0007669"/>
    <property type="project" value="UniProtKB-KW"/>
</dbReference>
<dbReference type="GO" id="GO:0006006">
    <property type="term" value="P:glucose metabolic process"/>
    <property type="evidence" value="ECO:0007669"/>
    <property type="project" value="UniProtKB-KW"/>
</dbReference>
<dbReference type="CDD" id="cd04367">
    <property type="entry name" value="IlGF_insulin_like"/>
    <property type="match status" value="1"/>
</dbReference>
<dbReference type="FunFam" id="1.10.100.10:FF:000003">
    <property type="entry name" value="Insulin"/>
    <property type="match status" value="1"/>
</dbReference>
<dbReference type="Gene3D" id="1.10.100.10">
    <property type="entry name" value="Insulin-like"/>
    <property type="match status" value="1"/>
</dbReference>
<dbReference type="InterPro" id="IPR004825">
    <property type="entry name" value="Insulin"/>
</dbReference>
<dbReference type="InterPro" id="IPR016179">
    <property type="entry name" value="Insulin-like"/>
</dbReference>
<dbReference type="InterPro" id="IPR036438">
    <property type="entry name" value="Insulin-like_sf"/>
</dbReference>
<dbReference type="InterPro" id="IPR022353">
    <property type="entry name" value="Insulin_CS"/>
</dbReference>
<dbReference type="InterPro" id="IPR022352">
    <property type="entry name" value="Insulin_family"/>
</dbReference>
<dbReference type="PANTHER" id="PTHR11454:SF9">
    <property type="entry name" value="INSULIN"/>
    <property type="match status" value="1"/>
</dbReference>
<dbReference type="PANTHER" id="PTHR11454">
    <property type="entry name" value="INSULIN/INSULIN GROWTH FACTOR"/>
    <property type="match status" value="1"/>
</dbReference>
<dbReference type="Pfam" id="PF00049">
    <property type="entry name" value="Insulin"/>
    <property type="match status" value="1"/>
</dbReference>
<dbReference type="PRINTS" id="PR00277">
    <property type="entry name" value="INSULIN"/>
</dbReference>
<dbReference type="PRINTS" id="PR00276">
    <property type="entry name" value="INSULINFAMLY"/>
</dbReference>
<dbReference type="SMART" id="SM00078">
    <property type="entry name" value="IlGF"/>
    <property type="match status" value="1"/>
</dbReference>
<dbReference type="SUPFAM" id="SSF56994">
    <property type="entry name" value="Insulin-like"/>
    <property type="match status" value="1"/>
</dbReference>
<dbReference type="PROSITE" id="PS00262">
    <property type="entry name" value="INSULIN"/>
    <property type="match status" value="1"/>
</dbReference>
<proteinExistence type="inferred from homology"/>
<accession>Q98TA8</accession>
<keyword id="KW-0119">Carbohydrate metabolism</keyword>
<keyword id="KW-0165">Cleavage on pair of basic residues</keyword>
<keyword id="KW-1015">Disulfide bond</keyword>
<keyword id="KW-0313">Glucose metabolism</keyword>
<keyword id="KW-0372">Hormone</keyword>
<keyword id="KW-0964">Secreted</keyword>
<keyword id="KW-0732">Signal</keyword>
<evidence type="ECO:0000250" key="1"/>
<evidence type="ECO:0000255" key="2"/>
<evidence type="ECO:0000305" key="3"/>
<sequence length="110" mass="12324">MALWLQAFTLLVLLVLSSPGAQSASSQHLCGSHLVDALYMVCGEKGFFYQPKTKRDVDPLLGFLSPKSAQENEADEYPYKDQGDLKVKRGIVEQCCHHPCNIFDLQNYCN</sequence>